<feature type="transit peptide" description="Mitochondrion" evidence="1">
    <location>
        <begin position="1"/>
        <end position="55"/>
    </location>
</feature>
<feature type="chain" id="PRO_0000030507" description="Large ribosomal subunit protein bL28m">
    <location>
        <begin position="56"/>
        <end position="257"/>
    </location>
</feature>
<gene>
    <name type="primary">Mrpl28</name>
</gene>
<proteinExistence type="evidence at protein level"/>
<evidence type="ECO:0000250" key="1"/>
<evidence type="ECO:0000250" key="2">
    <source>
        <dbReference type="UniProtKB" id="Q13084"/>
    </source>
</evidence>
<evidence type="ECO:0000250" key="3">
    <source>
        <dbReference type="UniProtKB" id="Q2HJJ1"/>
    </source>
</evidence>
<evidence type="ECO:0000269" key="4">
    <source>
    </source>
</evidence>
<evidence type="ECO:0000305" key="5"/>
<name>RM28_MOUSE</name>
<accession>Q9D1B9</accession>
<accession>A6H5Y0</accession>
<accession>Q3TR04</accession>
<accession>Q497Y8</accession>
<accession>Q66JU7</accession>
<dbReference type="EMBL" id="AK003727">
    <property type="protein sequence ID" value="BAB22962.2"/>
    <property type="status" value="ALT_INIT"/>
    <property type="molecule type" value="mRNA"/>
</dbReference>
<dbReference type="EMBL" id="AK031701">
    <property type="protein sequence ID" value="BAC27521.1"/>
    <property type="status" value="ALT_INIT"/>
    <property type="molecule type" value="mRNA"/>
</dbReference>
<dbReference type="EMBL" id="AK046544">
    <property type="protein sequence ID" value="BAC32780.1"/>
    <property type="status" value="ALT_INIT"/>
    <property type="molecule type" value="mRNA"/>
</dbReference>
<dbReference type="EMBL" id="AK163190">
    <property type="protein sequence ID" value="BAE37227.1"/>
    <property type="molecule type" value="mRNA"/>
</dbReference>
<dbReference type="EMBL" id="BC002293">
    <property type="protein sequence ID" value="AAH02293.2"/>
    <property type="status" value="ALT_INIT"/>
    <property type="molecule type" value="mRNA"/>
</dbReference>
<dbReference type="EMBL" id="BC005797">
    <property type="protein sequence ID" value="AAH05797.2"/>
    <property type="status" value="ALT_INIT"/>
    <property type="molecule type" value="mRNA"/>
</dbReference>
<dbReference type="EMBL" id="BC080753">
    <property type="protein sequence ID" value="AAH80753.1"/>
    <property type="status" value="ALT_INIT"/>
    <property type="molecule type" value="mRNA"/>
</dbReference>
<dbReference type="EMBL" id="BC100322">
    <property type="protein sequence ID" value="AAI00323.1"/>
    <property type="status" value="ALT_INIT"/>
    <property type="molecule type" value="mRNA"/>
</dbReference>
<dbReference type="EMBL" id="BC145680">
    <property type="protein sequence ID" value="AAI45681.1"/>
    <property type="molecule type" value="mRNA"/>
</dbReference>
<dbReference type="EMBL" id="BC145682">
    <property type="protein sequence ID" value="AAI45683.1"/>
    <property type="molecule type" value="mRNA"/>
</dbReference>
<dbReference type="CCDS" id="CCDS37509.1"/>
<dbReference type="RefSeq" id="NP_077189.2">
    <property type="nucleotide sequence ID" value="NM_024227.3"/>
</dbReference>
<dbReference type="SMR" id="Q9D1B9"/>
<dbReference type="BioGRID" id="212951">
    <property type="interactions" value="13"/>
</dbReference>
<dbReference type="ComplexPortal" id="CPX-5302">
    <property type="entry name" value="39S mitochondrial large ribosomal subunit"/>
</dbReference>
<dbReference type="FunCoup" id="Q9D1B9">
    <property type="interactions" value="1694"/>
</dbReference>
<dbReference type="IntAct" id="Q9D1B9">
    <property type="interactions" value="1"/>
</dbReference>
<dbReference type="MINT" id="Q9D1B9"/>
<dbReference type="STRING" id="10090.ENSMUSP00000025014"/>
<dbReference type="GlyGen" id="Q9D1B9">
    <property type="glycosylation" value="1 site, 1 O-linked glycan (1 site)"/>
</dbReference>
<dbReference type="iPTMnet" id="Q9D1B9"/>
<dbReference type="PhosphoSitePlus" id="Q9D1B9"/>
<dbReference type="SwissPalm" id="Q9D1B9"/>
<dbReference type="jPOST" id="Q9D1B9"/>
<dbReference type="PaxDb" id="10090-ENSMUSP00000025014"/>
<dbReference type="PeptideAtlas" id="Q9D1B9"/>
<dbReference type="ProteomicsDB" id="300400"/>
<dbReference type="Pumba" id="Q9D1B9"/>
<dbReference type="Antibodypedia" id="22648">
    <property type="antibodies" value="278 antibodies from 33 providers"/>
</dbReference>
<dbReference type="Ensembl" id="ENSMUST00000025014.10">
    <property type="protein sequence ID" value="ENSMUSP00000025014.9"/>
    <property type="gene ID" value="ENSMUSG00000024181.10"/>
</dbReference>
<dbReference type="GeneID" id="68611"/>
<dbReference type="KEGG" id="mmu:68611"/>
<dbReference type="UCSC" id="uc008bdl.2">
    <property type="organism name" value="mouse"/>
</dbReference>
<dbReference type="AGR" id="MGI:1915861"/>
<dbReference type="CTD" id="10573"/>
<dbReference type="MGI" id="MGI:1915861">
    <property type="gene designation" value="Mrpl28"/>
</dbReference>
<dbReference type="VEuPathDB" id="HostDB:ENSMUSG00000024181"/>
<dbReference type="eggNOG" id="KOG3279">
    <property type="taxonomic scope" value="Eukaryota"/>
</dbReference>
<dbReference type="GeneTree" id="ENSGT00390000017359"/>
<dbReference type="HOGENOM" id="CLU_078055_0_0_1"/>
<dbReference type="InParanoid" id="Q9D1B9"/>
<dbReference type="OMA" id="KMSNRLK"/>
<dbReference type="OrthoDB" id="361870at2759"/>
<dbReference type="PhylomeDB" id="Q9D1B9"/>
<dbReference type="TreeFam" id="TF313040"/>
<dbReference type="Reactome" id="R-MMU-5389840">
    <property type="pathway name" value="Mitochondrial translation elongation"/>
</dbReference>
<dbReference type="Reactome" id="R-MMU-5419276">
    <property type="pathway name" value="Mitochondrial translation termination"/>
</dbReference>
<dbReference type="BioGRID-ORCS" id="68611">
    <property type="hits" value="18 hits in 79 CRISPR screens"/>
</dbReference>
<dbReference type="ChiTaRS" id="Mrpl28">
    <property type="organism name" value="mouse"/>
</dbReference>
<dbReference type="PRO" id="PR:Q9D1B9"/>
<dbReference type="Proteomes" id="UP000000589">
    <property type="component" value="Chromosome 17"/>
</dbReference>
<dbReference type="RNAct" id="Q9D1B9">
    <property type="molecule type" value="protein"/>
</dbReference>
<dbReference type="Bgee" id="ENSMUSG00000024181">
    <property type="expression patterns" value="Expressed in cardiac muscle of left ventricle and 265 other cell types or tissues"/>
</dbReference>
<dbReference type="ExpressionAtlas" id="Q9D1B9">
    <property type="expression patterns" value="baseline and differential"/>
</dbReference>
<dbReference type="GO" id="GO:0005829">
    <property type="term" value="C:cytosol"/>
    <property type="evidence" value="ECO:0007669"/>
    <property type="project" value="Ensembl"/>
</dbReference>
<dbReference type="GO" id="GO:0005743">
    <property type="term" value="C:mitochondrial inner membrane"/>
    <property type="evidence" value="ECO:0000303"/>
    <property type="project" value="ComplexPortal"/>
</dbReference>
<dbReference type="GO" id="GO:0005762">
    <property type="term" value="C:mitochondrial large ribosomal subunit"/>
    <property type="evidence" value="ECO:0000250"/>
    <property type="project" value="UniProtKB"/>
</dbReference>
<dbReference type="GO" id="GO:0005761">
    <property type="term" value="C:mitochondrial ribosome"/>
    <property type="evidence" value="ECO:0000250"/>
    <property type="project" value="UniProtKB"/>
</dbReference>
<dbReference type="GO" id="GO:0005739">
    <property type="term" value="C:mitochondrion"/>
    <property type="evidence" value="ECO:0007005"/>
    <property type="project" value="MGI"/>
</dbReference>
<dbReference type="GO" id="GO:0003735">
    <property type="term" value="F:structural constituent of ribosome"/>
    <property type="evidence" value="ECO:0007669"/>
    <property type="project" value="InterPro"/>
</dbReference>
<dbReference type="GO" id="GO:0032543">
    <property type="term" value="P:mitochondrial translation"/>
    <property type="evidence" value="ECO:0000303"/>
    <property type="project" value="ComplexPortal"/>
</dbReference>
<dbReference type="Gene3D" id="2.30.170.40">
    <property type="entry name" value="Ribosomal protein L28/L24"/>
    <property type="match status" value="1"/>
</dbReference>
<dbReference type="InterPro" id="IPR026569">
    <property type="entry name" value="Ribosomal_bL28"/>
</dbReference>
<dbReference type="InterPro" id="IPR034704">
    <property type="entry name" value="Ribosomal_bL28/bL31-like_sf"/>
</dbReference>
<dbReference type="InterPro" id="IPR037147">
    <property type="entry name" value="Ribosomal_bL28_sf"/>
</dbReference>
<dbReference type="PANTHER" id="PTHR13528">
    <property type="entry name" value="39S RIBOSOMAL PROTEIN L28, MITOCHONDRIAL"/>
    <property type="match status" value="1"/>
</dbReference>
<dbReference type="PANTHER" id="PTHR13528:SF2">
    <property type="entry name" value="LARGE RIBOSOMAL SUBUNIT PROTEIN BL28M"/>
    <property type="match status" value="1"/>
</dbReference>
<dbReference type="Pfam" id="PF00830">
    <property type="entry name" value="Ribosomal_L28"/>
    <property type="match status" value="1"/>
</dbReference>
<dbReference type="SUPFAM" id="SSF143800">
    <property type="entry name" value="L28p-like"/>
    <property type="match status" value="1"/>
</dbReference>
<protein>
    <recommendedName>
        <fullName evidence="5">Large ribosomal subunit protein bL28m</fullName>
    </recommendedName>
    <alternativeName>
        <fullName>39S ribosomal protein L28, mitochondrial</fullName>
        <shortName>L28mt</shortName>
        <shortName>MRP-L28</shortName>
    </alternativeName>
</protein>
<reference key="1">
    <citation type="journal article" date="2005" name="Science">
        <title>The transcriptional landscape of the mammalian genome.</title>
        <authorList>
            <person name="Carninci P."/>
            <person name="Kasukawa T."/>
            <person name="Katayama S."/>
            <person name="Gough J."/>
            <person name="Frith M.C."/>
            <person name="Maeda N."/>
            <person name="Oyama R."/>
            <person name="Ravasi T."/>
            <person name="Lenhard B."/>
            <person name="Wells C."/>
            <person name="Kodzius R."/>
            <person name="Shimokawa K."/>
            <person name="Bajic V.B."/>
            <person name="Brenner S.E."/>
            <person name="Batalov S."/>
            <person name="Forrest A.R."/>
            <person name="Zavolan M."/>
            <person name="Davis M.J."/>
            <person name="Wilming L.G."/>
            <person name="Aidinis V."/>
            <person name="Allen J.E."/>
            <person name="Ambesi-Impiombato A."/>
            <person name="Apweiler R."/>
            <person name="Aturaliya R.N."/>
            <person name="Bailey T.L."/>
            <person name="Bansal M."/>
            <person name="Baxter L."/>
            <person name="Beisel K.W."/>
            <person name="Bersano T."/>
            <person name="Bono H."/>
            <person name="Chalk A.M."/>
            <person name="Chiu K.P."/>
            <person name="Choudhary V."/>
            <person name="Christoffels A."/>
            <person name="Clutterbuck D.R."/>
            <person name="Crowe M.L."/>
            <person name="Dalla E."/>
            <person name="Dalrymple B.P."/>
            <person name="de Bono B."/>
            <person name="Della Gatta G."/>
            <person name="di Bernardo D."/>
            <person name="Down T."/>
            <person name="Engstrom P."/>
            <person name="Fagiolini M."/>
            <person name="Faulkner G."/>
            <person name="Fletcher C.F."/>
            <person name="Fukushima T."/>
            <person name="Furuno M."/>
            <person name="Futaki S."/>
            <person name="Gariboldi M."/>
            <person name="Georgii-Hemming P."/>
            <person name="Gingeras T.R."/>
            <person name="Gojobori T."/>
            <person name="Green R.E."/>
            <person name="Gustincich S."/>
            <person name="Harbers M."/>
            <person name="Hayashi Y."/>
            <person name="Hensch T.K."/>
            <person name="Hirokawa N."/>
            <person name="Hill D."/>
            <person name="Huminiecki L."/>
            <person name="Iacono M."/>
            <person name="Ikeo K."/>
            <person name="Iwama A."/>
            <person name="Ishikawa T."/>
            <person name="Jakt M."/>
            <person name="Kanapin A."/>
            <person name="Katoh M."/>
            <person name="Kawasawa Y."/>
            <person name="Kelso J."/>
            <person name="Kitamura H."/>
            <person name="Kitano H."/>
            <person name="Kollias G."/>
            <person name="Krishnan S.P."/>
            <person name="Kruger A."/>
            <person name="Kummerfeld S.K."/>
            <person name="Kurochkin I.V."/>
            <person name="Lareau L.F."/>
            <person name="Lazarevic D."/>
            <person name="Lipovich L."/>
            <person name="Liu J."/>
            <person name="Liuni S."/>
            <person name="McWilliam S."/>
            <person name="Madan Babu M."/>
            <person name="Madera M."/>
            <person name="Marchionni L."/>
            <person name="Matsuda H."/>
            <person name="Matsuzawa S."/>
            <person name="Miki H."/>
            <person name="Mignone F."/>
            <person name="Miyake S."/>
            <person name="Morris K."/>
            <person name="Mottagui-Tabar S."/>
            <person name="Mulder N."/>
            <person name="Nakano N."/>
            <person name="Nakauchi H."/>
            <person name="Ng P."/>
            <person name="Nilsson R."/>
            <person name="Nishiguchi S."/>
            <person name="Nishikawa S."/>
            <person name="Nori F."/>
            <person name="Ohara O."/>
            <person name="Okazaki Y."/>
            <person name="Orlando V."/>
            <person name="Pang K.C."/>
            <person name="Pavan W.J."/>
            <person name="Pavesi G."/>
            <person name="Pesole G."/>
            <person name="Petrovsky N."/>
            <person name="Piazza S."/>
            <person name="Reed J."/>
            <person name="Reid J.F."/>
            <person name="Ring B.Z."/>
            <person name="Ringwald M."/>
            <person name="Rost B."/>
            <person name="Ruan Y."/>
            <person name="Salzberg S.L."/>
            <person name="Sandelin A."/>
            <person name="Schneider C."/>
            <person name="Schoenbach C."/>
            <person name="Sekiguchi K."/>
            <person name="Semple C.A."/>
            <person name="Seno S."/>
            <person name="Sessa L."/>
            <person name="Sheng Y."/>
            <person name="Shibata Y."/>
            <person name="Shimada H."/>
            <person name="Shimada K."/>
            <person name="Silva D."/>
            <person name="Sinclair B."/>
            <person name="Sperling S."/>
            <person name="Stupka E."/>
            <person name="Sugiura K."/>
            <person name="Sultana R."/>
            <person name="Takenaka Y."/>
            <person name="Taki K."/>
            <person name="Tammoja K."/>
            <person name="Tan S.L."/>
            <person name="Tang S."/>
            <person name="Taylor M.S."/>
            <person name="Tegner J."/>
            <person name="Teichmann S.A."/>
            <person name="Ueda H.R."/>
            <person name="van Nimwegen E."/>
            <person name="Verardo R."/>
            <person name="Wei C.L."/>
            <person name="Yagi K."/>
            <person name="Yamanishi H."/>
            <person name="Zabarovsky E."/>
            <person name="Zhu S."/>
            <person name="Zimmer A."/>
            <person name="Hide W."/>
            <person name="Bult C."/>
            <person name="Grimmond S.M."/>
            <person name="Teasdale R.D."/>
            <person name="Liu E.T."/>
            <person name="Brusic V."/>
            <person name="Quackenbush J."/>
            <person name="Wahlestedt C."/>
            <person name="Mattick J.S."/>
            <person name="Hume D.A."/>
            <person name="Kai C."/>
            <person name="Sasaki D."/>
            <person name="Tomaru Y."/>
            <person name="Fukuda S."/>
            <person name="Kanamori-Katayama M."/>
            <person name="Suzuki M."/>
            <person name="Aoki J."/>
            <person name="Arakawa T."/>
            <person name="Iida J."/>
            <person name="Imamura K."/>
            <person name="Itoh M."/>
            <person name="Kato T."/>
            <person name="Kawaji H."/>
            <person name="Kawagashira N."/>
            <person name="Kawashima T."/>
            <person name="Kojima M."/>
            <person name="Kondo S."/>
            <person name="Konno H."/>
            <person name="Nakano K."/>
            <person name="Ninomiya N."/>
            <person name="Nishio T."/>
            <person name="Okada M."/>
            <person name="Plessy C."/>
            <person name="Shibata K."/>
            <person name="Shiraki T."/>
            <person name="Suzuki S."/>
            <person name="Tagami M."/>
            <person name="Waki K."/>
            <person name="Watahiki A."/>
            <person name="Okamura-Oho Y."/>
            <person name="Suzuki H."/>
            <person name="Kawai J."/>
            <person name="Hayashizaki Y."/>
        </authorList>
    </citation>
    <scope>NUCLEOTIDE SEQUENCE [LARGE SCALE MRNA]</scope>
    <source>
        <strain>C57BL/6J</strain>
        <tissue>Adipose tissue</tissue>
        <tissue>Cerebellum</tissue>
        <tissue>Embryo</tissue>
        <tissue>Testis</tissue>
    </source>
</reference>
<reference evidence="5" key="2">
    <citation type="journal article" date="2004" name="Genome Res.">
        <title>The status, quality, and expansion of the NIH full-length cDNA project: the Mammalian Gene Collection (MGC).</title>
        <authorList>
            <consortium name="The MGC Project Team"/>
        </authorList>
    </citation>
    <scope>NUCLEOTIDE SEQUENCE [LARGE SCALE MRNA]</scope>
    <source>
        <strain>Czech II</strain>
        <strain>FVB/N</strain>
        <strain>NMRI</strain>
        <tissue>Brain</tissue>
        <tissue evidence="4">Mammary gland</tissue>
        <tissue>Thyroid</tissue>
    </source>
</reference>
<reference key="3">
    <citation type="journal article" date="2010" name="Cell">
        <title>A tissue-specific atlas of mouse protein phosphorylation and expression.</title>
        <authorList>
            <person name="Huttlin E.L."/>
            <person name="Jedrychowski M.P."/>
            <person name="Elias J.E."/>
            <person name="Goswami T."/>
            <person name="Rad R."/>
            <person name="Beausoleil S.A."/>
            <person name="Villen J."/>
            <person name="Haas W."/>
            <person name="Sowa M.E."/>
            <person name="Gygi S.P."/>
        </authorList>
    </citation>
    <scope>IDENTIFICATION BY MASS SPECTROMETRY [LARGE SCALE ANALYSIS]</scope>
    <source>
        <tissue>Brain</tissue>
        <tissue>Brown adipose tissue</tissue>
        <tissue>Heart</tissue>
        <tissue>Kidney</tissue>
        <tissue>Liver</tissue>
        <tissue>Spleen</tissue>
        <tissue>Testis</tissue>
    </source>
</reference>
<organism>
    <name type="scientific">Mus musculus</name>
    <name type="common">Mouse</name>
    <dbReference type="NCBI Taxonomy" id="10090"/>
    <lineage>
        <taxon>Eukaryota</taxon>
        <taxon>Metazoa</taxon>
        <taxon>Chordata</taxon>
        <taxon>Craniata</taxon>
        <taxon>Vertebrata</taxon>
        <taxon>Euteleostomi</taxon>
        <taxon>Mammalia</taxon>
        <taxon>Eutheria</taxon>
        <taxon>Euarchontoglires</taxon>
        <taxon>Glires</taxon>
        <taxon>Rodentia</taxon>
        <taxon>Myomorpha</taxon>
        <taxon>Muroidea</taxon>
        <taxon>Muridae</taxon>
        <taxon>Murinae</taxon>
        <taxon>Mus</taxon>
        <taxon>Mus</taxon>
    </lineage>
</organism>
<comment type="subunit">
    <text evidence="2 3">Component of the mitochondrial ribosome large subunit (39S) which comprises a 16S rRNA and about 50 distinct proteins. Interacts with OXA1L.</text>
</comment>
<comment type="subcellular location">
    <subcellularLocation>
        <location evidence="2">Mitochondrion</location>
    </subcellularLocation>
</comment>
<comment type="similarity">
    <text evidence="5">Belongs to the bacterial ribosomal protein bL28 family.</text>
</comment>
<comment type="sequence caution" evidence="5">
    <conflict type="erroneous initiation">
        <sequence resource="EMBL-CDS" id="AAH02293"/>
    </conflict>
</comment>
<comment type="sequence caution" evidence="5">
    <conflict type="erroneous initiation">
        <sequence resource="EMBL-CDS" id="AAH05797"/>
    </conflict>
</comment>
<comment type="sequence caution" evidence="5">
    <conflict type="erroneous initiation">
        <sequence resource="EMBL-CDS" id="AAH80753"/>
    </conflict>
</comment>
<comment type="sequence caution" evidence="5">
    <conflict type="erroneous initiation">
        <sequence resource="EMBL-CDS" id="AAI00323"/>
    </conflict>
</comment>
<comment type="sequence caution" evidence="5">
    <conflict type="erroneous initiation">
        <sequence resource="EMBL-CDS" id="BAB22962"/>
    </conflict>
</comment>
<comment type="sequence caution" evidence="5">
    <conflict type="erroneous initiation">
        <sequence resource="EMBL-CDS" id="BAC27521"/>
    </conflict>
</comment>
<comment type="sequence caution" evidence="5">
    <conflict type="erroneous initiation">
        <sequence resource="EMBL-CDS" id="BAC32780"/>
    </conflict>
</comment>
<keyword id="KW-0496">Mitochondrion</keyword>
<keyword id="KW-1185">Reference proteome</keyword>
<keyword id="KW-0687">Ribonucleoprotein</keyword>
<keyword id="KW-0689">Ribosomal protein</keyword>
<keyword id="KW-0809">Transit peptide</keyword>
<sequence>MPLHRYPVHLWQKLRLRQGICARLPAHFLRSLEEERTPTPVHYKPHGTKFKINPKNGQRERVEDVPIPVHYPPESQQGLWGGEGLILGYRYANNDKLSKRVKKVWKPQLFTRELYSEILDKKFTVTVTMRTLDLIDEAYGFDFYILKTPKEDLGSKFGMDLKRGMLLRLARQDPHLHPENPERRAAIYDKYRSFVIPEAEAEWVGLTLEEALEKQRLLEEKDPVPLFKVYVEELVQRLQEQVLSRPAVVQKRAGDHA</sequence>